<accession>A6TTL2</accession>
<protein>
    <recommendedName>
        <fullName evidence="1">Ketol-acid reductoisomerase (NADP(+))</fullName>
        <shortName evidence="1">KARI</shortName>
        <ecNumber evidence="1">1.1.1.86</ecNumber>
    </recommendedName>
    <alternativeName>
        <fullName evidence="1">Acetohydroxy-acid isomeroreductase</fullName>
        <shortName evidence="1">AHIR</shortName>
    </alternativeName>
    <alternativeName>
        <fullName evidence="1">Alpha-keto-beta-hydroxylacyl reductoisomerase</fullName>
    </alternativeName>
    <alternativeName>
        <fullName evidence="1">Ketol-acid reductoisomerase type 1</fullName>
    </alternativeName>
    <alternativeName>
        <fullName evidence="1">Ketol-acid reductoisomerase type I</fullName>
    </alternativeName>
</protein>
<feature type="chain" id="PRO_1000060224" description="Ketol-acid reductoisomerase (NADP(+))">
    <location>
        <begin position="1"/>
        <end position="333"/>
    </location>
</feature>
<feature type="domain" description="KARI N-terminal Rossmann" evidence="2">
    <location>
        <begin position="2"/>
        <end position="182"/>
    </location>
</feature>
<feature type="domain" description="KARI C-terminal knotted" evidence="3">
    <location>
        <begin position="183"/>
        <end position="328"/>
    </location>
</feature>
<feature type="active site" evidence="1">
    <location>
        <position position="108"/>
    </location>
</feature>
<feature type="binding site" evidence="1">
    <location>
        <begin position="25"/>
        <end position="28"/>
    </location>
    <ligand>
        <name>NADP(+)</name>
        <dbReference type="ChEBI" id="CHEBI:58349"/>
    </ligand>
</feature>
<feature type="binding site" evidence="1">
    <location>
        <position position="51"/>
    </location>
    <ligand>
        <name>NADP(+)</name>
        <dbReference type="ChEBI" id="CHEBI:58349"/>
    </ligand>
</feature>
<feature type="binding site" evidence="1">
    <location>
        <position position="53"/>
    </location>
    <ligand>
        <name>NADP(+)</name>
        <dbReference type="ChEBI" id="CHEBI:58349"/>
    </ligand>
</feature>
<feature type="binding site" evidence="1">
    <location>
        <begin position="83"/>
        <end position="86"/>
    </location>
    <ligand>
        <name>NADP(+)</name>
        <dbReference type="ChEBI" id="CHEBI:58349"/>
    </ligand>
</feature>
<feature type="binding site" evidence="1">
    <location>
        <position position="134"/>
    </location>
    <ligand>
        <name>NADP(+)</name>
        <dbReference type="ChEBI" id="CHEBI:58349"/>
    </ligand>
</feature>
<feature type="binding site" evidence="1">
    <location>
        <position position="191"/>
    </location>
    <ligand>
        <name>Mg(2+)</name>
        <dbReference type="ChEBI" id="CHEBI:18420"/>
        <label>1</label>
    </ligand>
</feature>
<feature type="binding site" evidence="1">
    <location>
        <position position="191"/>
    </location>
    <ligand>
        <name>Mg(2+)</name>
        <dbReference type="ChEBI" id="CHEBI:18420"/>
        <label>2</label>
    </ligand>
</feature>
<feature type="binding site" evidence="1">
    <location>
        <position position="195"/>
    </location>
    <ligand>
        <name>Mg(2+)</name>
        <dbReference type="ChEBI" id="CHEBI:18420"/>
        <label>1</label>
    </ligand>
</feature>
<feature type="binding site" evidence="1">
    <location>
        <position position="227"/>
    </location>
    <ligand>
        <name>Mg(2+)</name>
        <dbReference type="ChEBI" id="CHEBI:18420"/>
        <label>2</label>
    </ligand>
</feature>
<feature type="binding site" evidence="1">
    <location>
        <position position="231"/>
    </location>
    <ligand>
        <name>Mg(2+)</name>
        <dbReference type="ChEBI" id="CHEBI:18420"/>
        <label>2</label>
    </ligand>
</feature>
<feature type="binding site" evidence="1">
    <location>
        <position position="252"/>
    </location>
    <ligand>
        <name>substrate</name>
    </ligand>
</feature>
<evidence type="ECO:0000255" key="1">
    <source>
        <dbReference type="HAMAP-Rule" id="MF_00435"/>
    </source>
</evidence>
<evidence type="ECO:0000255" key="2">
    <source>
        <dbReference type="PROSITE-ProRule" id="PRU01197"/>
    </source>
</evidence>
<evidence type="ECO:0000255" key="3">
    <source>
        <dbReference type="PROSITE-ProRule" id="PRU01198"/>
    </source>
</evidence>
<reference key="1">
    <citation type="journal article" date="2016" name="Genome Announc.">
        <title>Complete genome sequence of Alkaliphilus metalliredigens strain QYMF, an alkaliphilic and metal-reducing bacterium isolated from borax-contaminated leachate ponds.</title>
        <authorList>
            <person name="Hwang C."/>
            <person name="Copeland A."/>
            <person name="Lucas S."/>
            <person name="Lapidus A."/>
            <person name="Barry K."/>
            <person name="Detter J.C."/>
            <person name="Glavina Del Rio T."/>
            <person name="Hammon N."/>
            <person name="Israni S."/>
            <person name="Dalin E."/>
            <person name="Tice H."/>
            <person name="Pitluck S."/>
            <person name="Chertkov O."/>
            <person name="Brettin T."/>
            <person name="Bruce D."/>
            <person name="Han C."/>
            <person name="Schmutz J."/>
            <person name="Larimer F."/>
            <person name="Land M.L."/>
            <person name="Hauser L."/>
            <person name="Kyrpides N."/>
            <person name="Mikhailova N."/>
            <person name="Ye Q."/>
            <person name="Zhou J."/>
            <person name="Richardson P."/>
            <person name="Fields M.W."/>
        </authorList>
    </citation>
    <scope>NUCLEOTIDE SEQUENCE [LARGE SCALE GENOMIC DNA]</scope>
    <source>
        <strain>QYMF</strain>
    </source>
</reference>
<sequence>MAKLYYEKDCNLEVLKGKKVAIIGYGSQGHAHALNLKNSGVDVVVGLYEGSKSWERAEAEGLKVAVASDAAAEADVVVILVNDEKQVQVYEESIKPNLTAGKYLMFAHGFNIHYGQIVPSEDVNVFMVAPKGPGHTVRSQYQEGKGVPCLVSVYQDATGNTMDVALAYAAGIGGARAGVLKTTFKEETETDLFGEQAVLCGGVTELMKVGFEVLVEAGYEPESAYFECVHEMKLIIDMVVEGGLGNMRQSISDTAEYGDYSVGKRIITDETKKEMKKVLHEVQDGTFARNWILENKANRPAFTARRRMEQSHQVEVVGKELRDMMSWSKQSKK</sequence>
<name>ILVC_ALKMQ</name>
<gene>
    <name evidence="1" type="primary">ilvC</name>
    <name type="ordered locus">Amet_3402</name>
</gene>
<proteinExistence type="inferred from homology"/>
<comment type="function">
    <text evidence="1">Involved in the biosynthesis of branched-chain amino acids (BCAA). Catalyzes an alkyl-migration followed by a ketol-acid reduction of (S)-2-acetolactate (S2AL) to yield (R)-2,3-dihydroxy-isovalerate. In the isomerase reaction, S2AL is rearranged via a Mg-dependent methyl migration to produce 3-hydroxy-3-methyl-2-ketobutyrate (HMKB). In the reductase reaction, this 2-ketoacid undergoes a metal-dependent reduction by NADPH to yield (R)-2,3-dihydroxy-isovalerate.</text>
</comment>
<comment type="catalytic activity">
    <reaction evidence="1">
        <text>(2R)-2,3-dihydroxy-3-methylbutanoate + NADP(+) = (2S)-2-acetolactate + NADPH + H(+)</text>
        <dbReference type="Rhea" id="RHEA:22068"/>
        <dbReference type="ChEBI" id="CHEBI:15378"/>
        <dbReference type="ChEBI" id="CHEBI:49072"/>
        <dbReference type="ChEBI" id="CHEBI:57783"/>
        <dbReference type="ChEBI" id="CHEBI:58349"/>
        <dbReference type="ChEBI" id="CHEBI:58476"/>
        <dbReference type="EC" id="1.1.1.86"/>
    </reaction>
</comment>
<comment type="catalytic activity">
    <reaction evidence="1">
        <text>(2R,3R)-2,3-dihydroxy-3-methylpentanoate + NADP(+) = (S)-2-ethyl-2-hydroxy-3-oxobutanoate + NADPH + H(+)</text>
        <dbReference type="Rhea" id="RHEA:13493"/>
        <dbReference type="ChEBI" id="CHEBI:15378"/>
        <dbReference type="ChEBI" id="CHEBI:49256"/>
        <dbReference type="ChEBI" id="CHEBI:49258"/>
        <dbReference type="ChEBI" id="CHEBI:57783"/>
        <dbReference type="ChEBI" id="CHEBI:58349"/>
        <dbReference type="EC" id="1.1.1.86"/>
    </reaction>
</comment>
<comment type="cofactor">
    <cofactor evidence="1">
        <name>Mg(2+)</name>
        <dbReference type="ChEBI" id="CHEBI:18420"/>
    </cofactor>
    <text evidence="1">Binds 2 magnesium ions per subunit.</text>
</comment>
<comment type="pathway">
    <text evidence="1">Amino-acid biosynthesis; L-isoleucine biosynthesis; L-isoleucine from 2-oxobutanoate: step 2/4.</text>
</comment>
<comment type="pathway">
    <text evidence="1">Amino-acid biosynthesis; L-valine biosynthesis; L-valine from pyruvate: step 2/4.</text>
</comment>
<comment type="similarity">
    <text evidence="1">Belongs to the ketol-acid reductoisomerase family.</text>
</comment>
<organism>
    <name type="scientific">Alkaliphilus metalliredigens (strain QYMF)</name>
    <dbReference type="NCBI Taxonomy" id="293826"/>
    <lineage>
        <taxon>Bacteria</taxon>
        <taxon>Bacillati</taxon>
        <taxon>Bacillota</taxon>
        <taxon>Clostridia</taxon>
        <taxon>Peptostreptococcales</taxon>
        <taxon>Natronincolaceae</taxon>
        <taxon>Alkaliphilus</taxon>
    </lineage>
</organism>
<dbReference type="EC" id="1.1.1.86" evidence="1"/>
<dbReference type="EMBL" id="CP000724">
    <property type="protein sequence ID" value="ABR49530.1"/>
    <property type="molecule type" value="Genomic_DNA"/>
</dbReference>
<dbReference type="RefSeq" id="WP_012064493.1">
    <property type="nucleotide sequence ID" value="NC_009633.1"/>
</dbReference>
<dbReference type="SMR" id="A6TTL2"/>
<dbReference type="STRING" id="293826.Amet_3402"/>
<dbReference type="KEGG" id="amt:Amet_3402"/>
<dbReference type="eggNOG" id="COG0059">
    <property type="taxonomic scope" value="Bacteria"/>
</dbReference>
<dbReference type="HOGENOM" id="CLU_033821_0_1_9"/>
<dbReference type="OrthoDB" id="9804088at2"/>
<dbReference type="UniPathway" id="UPA00047">
    <property type="reaction ID" value="UER00056"/>
</dbReference>
<dbReference type="UniPathway" id="UPA00049">
    <property type="reaction ID" value="UER00060"/>
</dbReference>
<dbReference type="Proteomes" id="UP000001572">
    <property type="component" value="Chromosome"/>
</dbReference>
<dbReference type="GO" id="GO:0005829">
    <property type="term" value="C:cytosol"/>
    <property type="evidence" value="ECO:0007669"/>
    <property type="project" value="TreeGrafter"/>
</dbReference>
<dbReference type="GO" id="GO:0004455">
    <property type="term" value="F:ketol-acid reductoisomerase activity"/>
    <property type="evidence" value="ECO:0007669"/>
    <property type="project" value="UniProtKB-UniRule"/>
</dbReference>
<dbReference type="GO" id="GO:0000287">
    <property type="term" value="F:magnesium ion binding"/>
    <property type="evidence" value="ECO:0007669"/>
    <property type="project" value="UniProtKB-UniRule"/>
</dbReference>
<dbReference type="GO" id="GO:0050661">
    <property type="term" value="F:NADP binding"/>
    <property type="evidence" value="ECO:0007669"/>
    <property type="project" value="InterPro"/>
</dbReference>
<dbReference type="GO" id="GO:0009097">
    <property type="term" value="P:isoleucine biosynthetic process"/>
    <property type="evidence" value="ECO:0007669"/>
    <property type="project" value="UniProtKB-UniRule"/>
</dbReference>
<dbReference type="GO" id="GO:0009099">
    <property type="term" value="P:L-valine biosynthetic process"/>
    <property type="evidence" value="ECO:0007669"/>
    <property type="project" value="UniProtKB-UniRule"/>
</dbReference>
<dbReference type="FunFam" id="3.40.50.720:FF:000023">
    <property type="entry name" value="Ketol-acid reductoisomerase (NADP(+))"/>
    <property type="match status" value="1"/>
</dbReference>
<dbReference type="Gene3D" id="6.10.240.10">
    <property type="match status" value="1"/>
</dbReference>
<dbReference type="Gene3D" id="3.40.50.720">
    <property type="entry name" value="NAD(P)-binding Rossmann-like Domain"/>
    <property type="match status" value="1"/>
</dbReference>
<dbReference type="HAMAP" id="MF_00435">
    <property type="entry name" value="IlvC"/>
    <property type="match status" value="1"/>
</dbReference>
<dbReference type="InterPro" id="IPR008927">
    <property type="entry name" value="6-PGluconate_DH-like_C_sf"/>
</dbReference>
<dbReference type="InterPro" id="IPR013023">
    <property type="entry name" value="KARI"/>
</dbReference>
<dbReference type="InterPro" id="IPR000506">
    <property type="entry name" value="KARI_C"/>
</dbReference>
<dbReference type="InterPro" id="IPR013116">
    <property type="entry name" value="KARI_N"/>
</dbReference>
<dbReference type="InterPro" id="IPR014359">
    <property type="entry name" value="KARI_prok"/>
</dbReference>
<dbReference type="InterPro" id="IPR036291">
    <property type="entry name" value="NAD(P)-bd_dom_sf"/>
</dbReference>
<dbReference type="NCBIfam" id="TIGR00465">
    <property type="entry name" value="ilvC"/>
    <property type="match status" value="1"/>
</dbReference>
<dbReference type="NCBIfam" id="NF004017">
    <property type="entry name" value="PRK05479.1"/>
    <property type="match status" value="1"/>
</dbReference>
<dbReference type="NCBIfam" id="NF009940">
    <property type="entry name" value="PRK13403.1"/>
    <property type="match status" value="1"/>
</dbReference>
<dbReference type="PANTHER" id="PTHR21371">
    <property type="entry name" value="KETOL-ACID REDUCTOISOMERASE, MITOCHONDRIAL"/>
    <property type="match status" value="1"/>
</dbReference>
<dbReference type="PANTHER" id="PTHR21371:SF1">
    <property type="entry name" value="KETOL-ACID REDUCTOISOMERASE, MITOCHONDRIAL"/>
    <property type="match status" value="1"/>
</dbReference>
<dbReference type="Pfam" id="PF01450">
    <property type="entry name" value="KARI_C"/>
    <property type="match status" value="1"/>
</dbReference>
<dbReference type="Pfam" id="PF07991">
    <property type="entry name" value="KARI_N"/>
    <property type="match status" value="1"/>
</dbReference>
<dbReference type="PIRSF" id="PIRSF000116">
    <property type="entry name" value="IlvC_gammaproteo"/>
    <property type="match status" value="1"/>
</dbReference>
<dbReference type="SUPFAM" id="SSF48179">
    <property type="entry name" value="6-phosphogluconate dehydrogenase C-terminal domain-like"/>
    <property type="match status" value="1"/>
</dbReference>
<dbReference type="SUPFAM" id="SSF51735">
    <property type="entry name" value="NAD(P)-binding Rossmann-fold domains"/>
    <property type="match status" value="1"/>
</dbReference>
<dbReference type="PROSITE" id="PS51851">
    <property type="entry name" value="KARI_C"/>
    <property type="match status" value="1"/>
</dbReference>
<dbReference type="PROSITE" id="PS51850">
    <property type="entry name" value="KARI_N"/>
    <property type="match status" value="1"/>
</dbReference>
<keyword id="KW-0028">Amino-acid biosynthesis</keyword>
<keyword id="KW-0100">Branched-chain amino acid biosynthesis</keyword>
<keyword id="KW-0460">Magnesium</keyword>
<keyword id="KW-0479">Metal-binding</keyword>
<keyword id="KW-0521">NADP</keyword>
<keyword id="KW-0560">Oxidoreductase</keyword>
<keyword id="KW-1185">Reference proteome</keyword>